<reference key="1">
    <citation type="submission" date="1997-08" db="EMBL/GenBank/DDBJ databases">
        <title>Bacillus subtilis chromosomal region downstream nprE.</title>
        <authorList>
            <person name="Bertero M."/>
            <person name="Presecan E."/>
            <person name="Glaser P."/>
            <person name="Richou A."/>
            <person name="Danchin A."/>
        </authorList>
    </citation>
    <scope>NUCLEOTIDE SEQUENCE [GENOMIC DNA]</scope>
    <source>
        <strain>168</strain>
    </source>
</reference>
<reference key="2">
    <citation type="journal article" date="1997" name="Nature">
        <title>The complete genome sequence of the Gram-positive bacterium Bacillus subtilis.</title>
        <authorList>
            <person name="Kunst F."/>
            <person name="Ogasawara N."/>
            <person name="Moszer I."/>
            <person name="Albertini A.M."/>
            <person name="Alloni G."/>
            <person name="Azevedo V."/>
            <person name="Bertero M.G."/>
            <person name="Bessieres P."/>
            <person name="Bolotin A."/>
            <person name="Borchert S."/>
            <person name="Borriss R."/>
            <person name="Boursier L."/>
            <person name="Brans A."/>
            <person name="Braun M."/>
            <person name="Brignell S.C."/>
            <person name="Bron S."/>
            <person name="Brouillet S."/>
            <person name="Bruschi C.V."/>
            <person name="Caldwell B."/>
            <person name="Capuano V."/>
            <person name="Carter N.M."/>
            <person name="Choi S.-K."/>
            <person name="Codani J.-J."/>
            <person name="Connerton I.F."/>
            <person name="Cummings N.J."/>
            <person name="Daniel R.A."/>
            <person name="Denizot F."/>
            <person name="Devine K.M."/>
            <person name="Duesterhoeft A."/>
            <person name="Ehrlich S.D."/>
            <person name="Emmerson P.T."/>
            <person name="Entian K.-D."/>
            <person name="Errington J."/>
            <person name="Fabret C."/>
            <person name="Ferrari E."/>
            <person name="Foulger D."/>
            <person name="Fritz C."/>
            <person name="Fujita M."/>
            <person name="Fujita Y."/>
            <person name="Fuma S."/>
            <person name="Galizzi A."/>
            <person name="Galleron N."/>
            <person name="Ghim S.-Y."/>
            <person name="Glaser P."/>
            <person name="Goffeau A."/>
            <person name="Golightly E.J."/>
            <person name="Grandi G."/>
            <person name="Guiseppi G."/>
            <person name="Guy B.J."/>
            <person name="Haga K."/>
            <person name="Haiech J."/>
            <person name="Harwood C.R."/>
            <person name="Henaut A."/>
            <person name="Hilbert H."/>
            <person name="Holsappel S."/>
            <person name="Hosono S."/>
            <person name="Hullo M.-F."/>
            <person name="Itaya M."/>
            <person name="Jones L.-M."/>
            <person name="Joris B."/>
            <person name="Karamata D."/>
            <person name="Kasahara Y."/>
            <person name="Klaerr-Blanchard M."/>
            <person name="Klein C."/>
            <person name="Kobayashi Y."/>
            <person name="Koetter P."/>
            <person name="Koningstein G."/>
            <person name="Krogh S."/>
            <person name="Kumano M."/>
            <person name="Kurita K."/>
            <person name="Lapidus A."/>
            <person name="Lardinois S."/>
            <person name="Lauber J."/>
            <person name="Lazarevic V."/>
            <person name="Lee S.-M."/>
            <person name="Levine A."/>
            <person name="Liu H."/>
            <person name="Masuda S."/>
            <person name="Mauel C."/>
            <person name="Medigue C."/>
            <person name="Medina N."/>
            <person name="Mellado R.P."/>
            <person name="Mizuno M."/>
            <person name="Moestl D."/>
            <person name="Nakai S."/>
            <person name="Noback M."/>
            <person name="Noone D."/>
            <person name="O'Reilly M."/>
            <person name="Ogawa K."/>
            <person name="Ogiwara A."/>
            <person name="Oudega B."/>
            <person name="Park S.-H."/>
            <person name="Parro V."/>
            <person name="Pohl T.M."/>
            <person name="Portetelle D."/>
            <person name="Porwollik S."/>
            <person name="Prescott A.M."/>
            <person name="Presecan E."/>
            <person name="Pujic P."/>
            <person name="Purnelle B."/>
            <person name="Rapoport G."/>
            <person name="Rey M."/>
            <person name="Reynolds S."/>
            <person name="Rieger M."/>
            <person name="Rivolta C."/>
            <person name="Rocha E."/>
            <person name="Roche B."/>
            <person name="Rose M."/>
            <person name="Sadaie Y."/>
            <person name="Sato T."/>
            <person name="Scanlan E."/>
            <person name="Schleich S."/>
            <person name="Schroeter R."/>
            <person name="Scoffone F."/>
            <person name="Sekiguchi J."/>
            <person name="Sekowska A."/>
            <person name="Seror S.J."/>
            <person name="Serror P."/>
            <person name="Shin B.-S."/>
            <person name="Soldo B."/>
            <person name="Sorokin A."/>
            <person name="Tacconi E."/>
            <person name="Takagi T."/>
            <person name="Takahashi H."/>
            <person name="Takemaru K."/>
            <person name="Takeuchi M."/>
            <person name="Tamakoshi A."/>
            <person name="Tanaka T."/>
            <person name="Terpstra P."/>
            <person name="Tognoni A."/>
            <person name="Tosato V."/>
            <person name="Uchiyama S."/>
            <person name="Vandenbol M."/>
            <person name="Vannier F."/>
            <person name="Vassarotti A."/>
            <person name="Viari A."/>
            <person name="Wambutt R."/>
            <person name="Wedler E."/>
            <person name="Wedler H."/>
            <person name="Weitzenegger T."/>
            <person name="Winters P."/>
            <person name="Wipat A."/>
            <person name="Yamamoto H."/>
            <person name="Yamane K."/>
            <person name="Yasumoto K."/>
            <person name="Yata K."/>
            <person name="Yoshida K."/>
            <person name="Yoshikawa H.-F."/>
            <person name="Zumstein E."/>
            <person name="Yoshikawa H."/>
            <person name="Danchin A."/>
        </authorList>
    </citation>
    <scope>NUCLEOTIDE SEQUENCE [LARGE SCALE GENOMIC DNA]</scope>
    <source>
        <strain>168</strain>
    </source>
</reference>
<reference evidence="4 5" key="3">
    <citation type="journal article" date="2018" name="Proc. Natl. Acad. Sci. U.S.A.">
        <title>Structural basis for antibiotic resistance mediated by the Bacillus subtilis ABCF ATPase VmlR.</title>
        <authorList>
            <person name="Crowe-McAuliffe C."/>
            <person name="Graf M."/>
            <person name="Huter P."/>
            <person name="Takada H."/>
            <person name="Abdelshahid M."/>
            <person name="Novacek J."/>
            <person name="Murina V."/>
            <person name="Atkinson G.C."/>
            <person name="Hauryliuk V."/>
            <person name="Wilson D.N."/>
        </authorList>
    </citation>
    <scope>STRUCTURE BY ELECTRON MICROSCOPY (3.10 ANGSTROMS) OF 1-59 WITH AND WITHOUT VIRGINIAMYCIN M</scope>
    <scope>SUBUNIT</scope>
</reference>
<protein>
    <recommendedName>
        <fullName evidence="3">Large ribosomal subunit protein bL32</fullName>
    </recommendedName>
    <alternativeName>
        <fullName>50S ribosomal protein L32</fullName>
    </alternativeName>
</protein>
<dbReference type="EMBL" id="Z98682">
    <property type="protein sequence ID" value="CAB11361.1"/>
    <property type="molecule type" value="Genomic_DNA"/>
</dbReference>
<dbReference type="EMBL" id="AL009126">
    <property type="protein sequence ID" value="CAB13381.1"/>
    <property type="molecule type" value="Genomic_DNA"/>
</dbReference>
<dbReference type="PIR" id="H69697">
    <property type="entry name" value="H69697"/>
</dbReference>
<dbReference type="RefSeq" id="NP_389391.1">
    <property type="nucleotide sequence ID" value="NC_000964.3"/>
</dbReference>
<dbReference type="RefSeq" id="WP_003154457.1">
    <property type="nucleotide sequence ID" value="NZ_OZ025638.1"/>
</dbReference>
<dbReference type="PDB" id="3J3V">
    <property type="method" value="EM"/>
    <property type="resolution" value="13.30 A"/>
    <property type="chains" value="0=1-59"/>
</dbReference>
<dbReference type="PDB" id="3J3W">
    <property type="method" value="EM"/>
    <property type="resolution" value="10.70 A"/>
    <property type="chains" value="0=1-59"/>
</dbReference>
<dbReference type="PDB" id="3J9W">
    <property type="method" value="EM"/>
    <property type="resolution" value="3.90 A"/>
    <property type="chains" value="B4=1-59"/>
</dbReference>
<dbReference type="PDB" id="5NJT">
    <property type="method" value="EM"/>
    <property type="resolution" value="3.80 A"/>
    <property type="chains" value="p=2-55"/>
</dbReference>
<dbReference type="PDB" id="6HA1">
    <property type="method" value="EM"/>
    <property type="resolution" value="3.10 A"/>
    <property type="chains" value="0=1-59"/>
</dbReference>
<dbReference type="PDB" id="6HA8">
    <property type="method" value="EM"/>
    <property type="resolution" value="3.50 A"/>
    <property type="chains" value="0=1-59"/>
</dbReference>
<dbReference type="PDB" id="6HTQ">
    <property type="method" value="EM"/>
    <property type="resolution" value="4.50 A"/>
    <property type="chains" value="1=2-55"/>
</dbReference>
<dbReference type="PDB" id="6PPF">
    <property type="method" value="EM"/>
    <property type="resolution" value="3.40 A"/>
    <property type="chains" value="b=1-59"/>
</dbReference>
<dbReference type="PDB" id="6PPK">
    <property type="method" value="EM"/>
    <property type="resolution" value="4.40 A"/>
    <property type="chains" value="b=1-59"/>
</dbReference>
<dbReference type="PDB" id="6PVK">
    <property type="method" value="EM"/>
    <property type="resolution" value="3.40 A"/>
    <property type="chains" value="b=1-59"/>
</dbReference>
<dbReference type="PDB" id="6TNN">
    <property type="method" value="EM"/>
    <property type="resolution" value="3.07 A"/>
    <property type="chains" value="p=1-59"/>
</dbReference>
<dbReference type="PDB" id="6TPQ">
    <property type="method" value="EM"/>
    <property type="resolution" value="3.07 A"/>
    <property type="chains" value="p=1-59"/>
</dbReference>
<dbReference type="PDB" id="7AQC">
    <property type="method" value="EM"/>
    <property type="resolution" value="2.99 A"/>
    <property type="chains" value="b=1-59"/>
</dbReference>
<dbReference type="PDB" id="7AQD">
    <property type="method" value="EM"/>
    <property type="resolution" value="3.10 A"/>
    <property type="chains" value="b=1-59"/>
</dbReference>
<dbReference type="PDB" id="7AS8">
    <property type="method" value="EM"/>
    <property type="resolution" value="2.90 A"/>
    <property type="chains" value="f=1-59"/>
</dbReference>
<dbReference type="PDB" id="7AS9">
    <property type="method" value="EM"/>
    <property type="resolution" value="3.50 A"/>
    <property type="chains" value="f=1-59"/>
</dbReference>
<dbReference type="PDB" id="7O5B">
    <property type="method" value="EM"/>
    <property type="resolution" value="3.33 A"/>
    <property type="chains" value="0=1-59"/>
</dbReference>
<dbReference type="PDB" id="7OPE">
    <property type="method" value="EM"/>
    <property type="resolution" value="3.20 A"/>
    <property type="chains" value="f=1-59"/>
</dbReference>
<dbReference type="PDB" id="7QGU">
    <property type="method" value="EM"/>
    <property type="resolution" value="4.75 A"/>
    <property type="chains" value="b=1-59"/>
</dbReference>
<dbReference type="PDB" id="7QH4">
    <property type="method" value="EM"/>
    <property type="resolution" value="5.45 A"/>
    <property type="chains" value="b=1-59"/>
</dbReference>
<dbReference type="PDB" id="7QV1">
    <property type="method" value="EM"/>
    <property type="resolution" value="3.50 A"/>
    <property type="chains" value="0=1-59"/>
</dbReference>
<dbReference type="PDB" id="7QV2">
    <property type="method" value="EM"/>
    <property type="resolution" value="3.50 A"/>
    <property type="chains" value="0=1-59"/>
</dbReference>
<dbReference type="PDB" id="7QV3">
    <property type="method" value="EM"/>
    <property type="resolution" value="5.14 A"/>
    <property type="chains" value="0=1-59"/>
</dbReference>
<dbReference type="PDB" id="7S9U">
    <property type="method" value="EM"/>
    <property type="resolution" value="3.20 A"/>
    <property type="chains" value="b=1-59"/>
</dbReference>
<dbReference type="PDB" id="7SAE">
    <property type="method" value="EM"/>
    <property type="resolution" value="3.00 A"/>
    <property type="chains" value="b=1-59"/>
</dbReference>
<dbReference type="PDB" id="8BUU">
    <property type="method" value="EM"/>
    <property type="resolution" value="2.90 A"/>
    <property type="chains" value="0=1-59"/>
</dbReference>
<dbReference type="PDB" id="8QCQ">
    <property type="method" value="EM"/>
    <property type="resolution" value="2.30 A"/>
    <property type="chains" value="0=1-59"/>
</dbReference>
<dbReference type="PDB" id="8QPP">
    <property type="method" value="EM"/>
    <property type="resolution" value="3.40 A"/>
    <property type="chains" value="0=1-59"/>
</dbReference>
<dbReference type="PDB" id="8R55">
    <property type="method" value="EM"/>
    <property type="resolution" value="3.57 A"/>
    <property type="chains" value="0=1-59"/>
</dbReference>
<dbReference type="PDB" id="8S1P">
    <property type="method" value="EM"/>
    <property type="resolution" value="1.96 A"/>
    <property type="chains" value="0=1-59"/>
</dbReference>
<dbReference type="PDB" id="8S1U">
    <property type="method" value="EM"/>
    <property type="resolution" value="3.40 A"/>
    <property type="chains" value="0=1-59"/>
</dbReference>
<dbReference type="PDB" id="9BS0">
    <property type="method" value="EM"/>
    <property type="resolution" value="3.30 A"/>
    <property type="chains" value="T=1-59"/>
</dbReference>
<dbReference type="PDB" id="9BSL">
    <property type="method" value="EM"/>
    <property type="resolution" value="3.10 A"/>
    <property type="chains" value="T=1-59"/>
</dbReference>
<dbReference type="PDB" id="9BSS">
    <property type="method" value="EM"/>
    <property type="resolution" value="3.10 A"/>
    <property type="chains" value="T=1-59"/>
</dbReference>
<dbReference type="PDBsum" id="3J3V"/>
<dbReference type="PDBsum" id="3J3W"/>
<dbReference type="PDBsum" id="3J9W"/>
<dbReference type="PDBsum" id="5NJT"/>
<dbReference type="PDBsum" id="6HA1"/>
<dbReference type="PDBsum" id="6HA8"/>
<dbReference type="PDBsum" id="6HTQ"/>
<dbReference type="PDBsum" id="6PPF"/>
<dbReference type="PDBsum" id="6PPK"/>
<dbReference type="PDBsum" id="6PVK"/>
<dbReference type="PDBsum" id="6TNN"/>
<dbReference type="PDBsum" id="6TPQ"/>
<dbReference type="PDBsum" id="7AQC"/>
<dbReference type="PDBsum" id="7AQD"/>
<dbReference type="PDBsum" id="7AS8"/>
<dbReference type="PDBsum" id="7AS9"/>
<dbReference type="PDBsum" id="7O5B"/>
<dbReference type="PDBsum" id="7OPE"/>
<dbReference type="PDBsum" id="7QGU"/>
<dbReference type="PDBsum" id="7QH4"/>
<dbReference type="PDBsum" id="7QV1"/>
<dbReference type="PDBsum" id="7QV2"/>
<dbReference type="PDBsum" id="7QV3"/>
<dbReference type="PDBsum" id="7S9U"/>
<dbReference type="PDBsum" id="7SAE"/>
<dbReference type="PDBsum" id="8BUU"/>
<dbReference type="PDBsum" id="8QCQ"/>
<dbReference type="PDBsum" id="8QPP"/>
<dbReference type="PDBsum" id="8R55"/>
<dbReference type="PDBsum" id="8S1P"/>
<dbReference type="PDBsum" id="8S1U"/>
<dbReference type="PDBsum" id="9BS0"/>
<dbReference type="PDBsum" id="9BSL"/>
<dbReference type="PDBsum" id="9BSS"/>
<dbReference type="EMDB" id="EMD-0176"/>
<dbReference type="EMDB" id="EMD-0177"/>
<dbReference type="EMDB" id="EMD-0270"/>
<dbReference type="EMDB" id="EMD-10535"/>
<dbReference type="EMDB" id="EMD-10543"/>
<dbReference type="EMDB" id="EMD-11862"/>
<dbReference type="EMDB" id="EMD-11864"/>
<dbReference type="EMDB" id="EMD-11889"/>
<dbReference type="EMDB" id="EMD-11890"/>
<dbReference type="EMDB" id="EMD-12734"/>
<dbReference type="EMDB" id="EMD-13017"/>
<dbReference type="EMDB" id="EMD-14157"/>
<dbReference type="EMDB" id="EMD-14158"/>
<dbReference type="EMDB" id="EMD-14159"/>
<dbReference type="EMDB" id="EMD-16246"/>
<dbReference type="EMDB" id="EMD-18332"/>
<dbReference type="EMDB" id="EMD-19638"/>
<dbReference type="EMDB" id="EMD-19641"/>
<dbReference type="EMDB" id="EMD-3656"/>
<dbReference type="EMDB" id="EMD-44849"/>
<dbReference type="EMDB" id="EMD-44869"/>
<dbReference type="EMDB" id="EMD-44871"/>
<dbReference type="SMR" id="O34687"/>
<dbReference type="FunCoup" id="O34687">
    <property type="interactions" value="198"/>
</dbReference>
<dbReference type="IntAct" id="O34687">
    <property type="interactions" value="1"/>
</dbReference>
<dbReference type="STRING" id="224308.BSU15080"/>
<dbReference type="PaxDb" id="224308-BSU15080"/>
<dbReference type="EnsemblBacteria" id="CAB13381">
    <property type="protein sequence ID" value="CAB13381"/>
    <property type="gene ID" value="BSU_15080"/>
</dbReference>
<dbReference type="GeneID" id="93080627"/>
<dbReference type="GeneID" id="939855"/>
<dbReference type="KEGG" id="bsu:BSU15080"/>
<dbReference type="PATRIC" id="fig|224308.179.peg.1644"/>
<dbReference type="eggNOG" id="COG0333">
    <property type="taxonomic scope" value="Bacteria"/>
</dbReference>
<dbReference type="InParanoid" id="O34687"/>
<dbReference type="OrthoDB" id="9812874at2"/>
<dbReference type="PhylomeDB" id="O34687"/>
<dbReference type="BioCyc" id="BSUB:BSU15080-MONOMER"/>
<dbReference type="PRO" id="PR:O34687"/>
<dbReference type="Proteomes" id="UP000001570">
    <property type="component" value="Chromosome"/>
</dbReference>
<dbReference type="GO" id="GO:0015934">
    <property type="term" value="C:large ribosomal subunit"/>
    <property type="evidence" value="ECO:0007669"/>
    <property type="project" value="InterPro"/>
</dbReference>
<dbReference type="GO" id="GO:0003735">
    <property type="term" value="F:structural constituent of ribosome"/>
    <property type="evidence" value="ECO:0000318"/>
    <property type="project" value="GO_Central"/>
</dbReference>
<dbReference type="GO" id="GO:0006412">
    <property type="term" value="P:translation"/>
    <property type="evidence" value="ECO:0007669"/>
    <property type="project" value="UniProtKB-UniRule"/>
</dbReference>
<dbReference type="HAMAP" id="MF_00340">
    <property type="entry name" value="Ribosomal_bL32"/>
    <property type="match status" value="1"/>
</dbReference>
<dbReference type="InterPro" id="IPR002677">
    <property type="entry name" value="Ribosomal_bL32"/>
</dbReference>
<dbReference type="InterPro" id="IPR044957">
    <property type="entry name" value="Ribosomal_bL32_bact"/>
</dbReference>
<dbReference type="InterPro" id="IPR011332">
    <property type="entry name" value="Ribosomal_zn-bd"/>
</dbReference>
<dbReference type="NCBIfam" id="TIGR01031">
    <property type="entry name" value="rpmF_bact"/>
    <property type="match status" value="1"/>
</dbReference>
<dbReference type="PANTHER" id="PTHR35534">
    <property type="entry name" value="50S RIBOSOMAL PROTEIN L32"/>
    <property type="match status" value="1"/>
</dbReference>
<dbReference type="PANTHER" id="PTHR35534:SF2">
    <property type="entry name" value="LARGE RIBOSOMAL SUBUNIT PROTEIN BL32"/>
    <property type="match status" value="1"/>
</dbReference>
<dbReference type="Pfam" id="PF01783">
    <property type="entry name" value="Ribosomal_L32p"/>
    <property type="match status" value="1"/>
</dbReference>
<dbReference type="SUPFAM" id="SSF57829">
    <property type="entry name" value="Zn-binding ribosomal proteins"/>
    <property type="match status" value="1"/>
</dbReference>
<keyword id="KW-0002">3D-structure</keyword>
<keyword id="KW-1185">Reference proteome</keyword>
<keyword id="KW-0687">Ribonucleoprotein</keyword>
<keyword id="KW-0689">Ribosomal protein</keyword>
<gene>
    <name type="primary">rpmF</name>
    <name type="ordered locus">BSU15080</name>
</gene>
<organism>
    <name type="scientific">Bacillus subtilis (strain 168)</name>
    <dbReference type="NCBI Taxonomy" id="224308"/>
    <lineage>
        <taxon>Bacteria</taxon>
        <taxon>Bacillati</taxon>
        <taxon>Bacillota</taxon>
        <taxon>Bacilli</taxon>
        <taxon>Bacillales</taxon>
        <taxon>Bacillaceae</taxon>
        <taxon>Bacillus</taxon>
    </lineage>
</organism>
<comment type="subunit">
    <text evidence="2">Part of the 50S ribosomal subunit.</text>
</comment>
<comment type="similarity">
    <text evidence="3">Belongs to the bacterial ribosomal protein bL32 family.</text>
</comment>
<proteinExistence type="evidence at protein level"/>
<accession>O34687</accession>
<sequence>MAVPFRRTSKMKKRLRRTHFKLNVPGMTECPSCGEMKLSHRVCKACGSYNGKDINVKSN</sequence>
<feature type="initiator methionine" description="Removed" evidence="1">
    <location>
        <position position="1"/>
    </location>
</feature>
<feature type="chain" id="PRO_0000172306" description="Large ribosomal subunit protein bL32">
    <location>
        <begin position="2"/>
        <end position="59"/>
    </location>
</feature>
<feature type="helix" evidence="7">
    <location>
        <begin position="10"/>
        <end position="16"/>
    </location>
</feature>
<feature type="strand" evidence="6">
    <location>
        <begin position="17"/>
        <end position="19"/>
    </location>
</feature>
<feature type="strand" evidence="7">
    <location>
        <begin position="27"/>
        <end position="29"/>
    </location>
</feature>
<feature type="turn" evidence="7">
    <location>
        <begin position="31"/>
        <end position="33"/>
    </location>
</feature>
<feature type="strand" evidence="7">
    <location>
        <begin position="36"/>
        <end position="38"/>
    </location>
</feature>
<feature type="turn" evidence="7">
    <location>
        <begin position="44"/>
        <end position="46"/>
    </location>
</feature>
<feature type="strand" evidence="7">
    <location>
        <begin position="48"/>
        <end position="53"/>
    </location>
</feature>
<name>RL32_BACSU</name>
<evidence type="ECO:0000250" key="1"/>
<evidence type="ECO:0000269" key="2">
    <source>
    </source>
</evidence>
<evidence type="ECO:0000305" key="3"/>
<evidence type="ECO:0007744" key="4">
    <source>
        <dbReference type="PDB" id="6HA1"/>
    </source>
</evidence>
<evidence type="ECO:0007744" key="5">
    <source>
        <dbReference type="PDB" id="6HA8"/>
    </source>
</evidence>
<evidence type="ECO:0007829" key="6">
    <source>
        <dbReference type="PDB" id="7AS8"/>
    </source>
</evidence>
<evidence type="ECO:0007829" key="7">
    <source>
        <dbReference type="PDB" id="8S1P"/>
    </source>
</evidence>